<reference key="1">
    <citation type="submission" date="2009-04" db="EMBL/GenBank/DDBJ databases">
        <title>Genome sequence of Bacillus anthracis A0248.</title>
        <authorList>
            <person name="Dodson R.J."/>
            <person name="Munk A.C."/>
            <person name="Bruce D."/>
            <person name="Detter C."/>
            <person name="Tapia R."/>
            <person name="Sutton G."/>
            <person name="Sims D."/>
            <person name="Brettin T."/>
        </authorList>
    </citation>
    <scope>NUCLEOTIDE SEQUENCE [LARGE SCALE GENOMIC DNA]</scope>
    <source>
        <strain>A0248</strain>
    </source>
</reference>
<organism>
    <name type="scientific">Bacillus anthracis (strain A0248)</name>
    <dbReference type="NCBI Taxonomy" id="592021"/>
    <lineage>
        <taxon>Bacteria</taxon>
        <taxon>Bacillati</taxon>
        <taxon>Bacillota</taxon>
        <taxon>Bacilli</taxon>
        <taxon>Bacillales</taxon>
        <taxon>Bacillaceae</taxon>
        <taxon>Bacillus</taxon>
        <taxon>Bacillus cereus group</taxon>
    </lineage>
</organism>
<keyword id="KW-0963">Cytoplasm</keyword>
<keyword id="KW-0328">Glycosyltransferase</keyword>
<keyword id="KW-0660">Purine salvage</keyword>
<keyword id="KW-0808">Transferase</keyword>
<protein>
    <recommendedName>
        <fullName evidence="1">Adenine phosphoribosyltransferase</fullName>
        <shortName evidence="1">APRT</shortName>
        <ecNumber evidence="1">2.4.2.7</ecNumber>
    </recommendedName>
</protein>
<proteinExistence type="inferred from homology"/>
<name>APT_BACAA</name>
<comment type="function">
    <text evidence="1">Catalyzes a salvage reaction resulting in the formation of AMP, that is energically less costly than de novo synthesis.</text>
</comment>
<comment type="catalytic activity">
    <reaction evidence="1">
        <text>AMP + diphosphate = 5-phospho-alpha-D-ribose 1-diphosphate + adenine</text>
        <dbReference type="Rhea" id="RHEA:16609"/>
        <dbReference type="ChEBI" id="CHEBI:16708"/>
        <dbReference type="ChEBI" id="CHEBI:33019"/>
        <dbReference type="ChEBI" id="CHEBI:58017"/>
        <dbReference type="ChEBI" id="CHEBI:456215"/>
        <dbReference type="EC" id="2.4.2.7"/>
    </reaction>
</comment>
<comment type="pathway">
    <text evidence="1">Purine metabolism; AMP biosynthesis via salvage pathway; AMP from adenine: step 1/1.</text>
</comment>
<comment type="subunit">
    <text evidence="1">Homodimer.</text>
</comment>
<comment type="subcellular location">
    <subcellularLocation>
        <location evidence="1">Cytoplasm</location>
    </subcellularLocation>
</comment>
<comment type="similarity">
    <text evidence="1">Belongs to the purine/pyrimidine phosphoribosyltransferase family.</text>
</comment>
<sequence length="170" mass="18644">MDFKQHIAIVPDYPKEGIVFKDITPLMNDGKAYKAATDAIVEYAKERDIDLVVGPEARGFIIGCPVSYALEVGFAPVRKLGKLPREVITVDYGKEYGKDVLTIHKDAIKPGQRVLITDDLLATGGTIEATIKLVEELGGVVAGIAFLVELTYLDGRKMLDGYDVLVLEKY</sequence>
<feature type="chain" id="PRO_1000116228" description="Adenine phosphoribosyltransferase">
    <location>
        <begin position="1"/>
        <end position="170"/>
    </location>
</feature>
<accession>C3P995</accession>
<evidence type="ECO:0000255" key="1">
    <source>
        <dbReference type="HAMAP-Rule" id="MF_00004"/>
    </source>
</evidence>
<gene>
    <name evidence="1" type="primary">apt</name>
    <name type="ordered locus">BAA_4655</name>
</gene>
<dbReference type="EC" id="2.4.2.7" evidence="1"/>
<dbReference type="EMBL" id="CP001598">
    <property type="protein sequence ID" value="ACQ48197.1"/>
    <property type="molecule type" value="Genomic_DNA"/>
</dbReference>
<dbReference type="RefSeq" id="WP_000346214.1">
    <property type="nucleotide sequence ID" value="NC_012659.1"/>
</dbReference>
<dbReference type="SMR" id="C3P995"/>
<dbReference type="KEGG" id="bai:BAA_4655"/>
<dbReference type="HOGENOM" id="CLU_063339_3_0_9"/>
<dbReference type="UniPathway" id="UPA00588">
    <property type="reaction ID" value="UER00646"/>
</dbReference>
<dbReference type="GO" id="GO:0005737">
    <property type="term" value="C:cytoplasm"/>
    <property type="evidence" value="ECO:0007669"/>
    <property type="project" value="UniProtKB-SubCell"/>
</dbReference>
<dbReference type="GO" id="GO:0002055">
    <property type="term" value="F:adenine binding"/>
    <property type="evidence" value="ECO:0007669"/>
    <property type="project" value="TreeGrafter"/>
</dbReference>
<dbReference type="GO" id="GO:0003999">
    <property type="term" value="F:adenine phosphoribosyltransferase activity"/>
    <property type="evidence" value="ECO:0007669"/>
    <property type="project" value="UniProtKB-UniRule"/>
</dbReference>
<dbReference type="GO" id="GO:0016208">
    <property type="term" value="F:AMP binding"/>
    <property type="evidence" value="ECO:0007669"/>
    <property type="project" value="TreeGrafter"/>
</dbReference>
<dbReference type="GO" id="GO:0006168">
    <property type="term" value="P:adenine salvage"/>
    <property type="evidence" value="ECO:0007669"/>
    <property type="project" value="InterPro"/>
</dbReference>
<dbReference type="GO" id="GO:0044209">
    <property type="term" value="P:AMP salvage"/>
    <property type="evidence" value="ECO:0007669"/>
    <property type="project" value="UniProtKB-UniRule"/>
</dbReference>
<dbReference type="GO" id="GO:0006166">
    <property type="term" value="P:purine ribonucleoside salvage"/>
    <property type="evidence" value="ECO:0007669"/>
    <property type="project" value="UniProtKB-KW"/>
</dbReference>
<dbReference type="CDD" id="cd06223">
    <property type="entry name" value="PRTases_typeI"/>
    <property type="match status" value="1"/>
</dbReference>
<dbReference type="FunFam" id="3.40.50.2020:FF:000004">
    <property type="entry name" value="Adenine phosphoribosyltransferase"/>
    <property type="match status" value="1"/>
</dbReference>
<dbReference type="Gene3D" id="3.40.50.2020">
    <property type="match status" value="1"/>
</dbReference>
<dbReference type="HAMAP" id="MF_00004">
    <property type="entry name" value="Aden_phosphoribosyltr"/>
    <property type="match status" value="1"/>
</dbReference>
<dbReference type="InterPro" id="IPR005764">
    <property type="entry name" value="Ade_phspho_trans"/>
</dbReference>
<dbReference type="InterPro" id="IPR000836">
    <property type="entry name" value="PRibTrfase_dom"/>
</dbReference>
<dbReference type="InterPro" id="IPR029057">
    <property type="entry name" value="PRTase-like"/>
</dbReference>
<dbReference type="InterPro" id="IPR050054">
    <property type="entry name" value="UPRTase/APRTase"/>
</dbReference>
<dbReference type="NCBIfam" id="TIGR01090">
    <property type="entry name" value="apt"/>
    <property type="match status" value="1"/>
</dbReference>
<dbReference type="NCBIfam" id="NF002633">
    <property type="entry name" value="PRK02304.1-2"/>
    <property type="match status" value="1"/>
</dbReference>
<dbReference type="NCBIfam" id="NF002634">
    <property type="entry name" value="PRK02304.1-3"/>
    <property type="match status" value="1"/>
</dbReference>
<dbReference type="NCBIfam" id="NF002636">
    <property type="entry name" value="PRK02304.1-5"/>
    <property type="match status" value="1"/>
</dbReference>
<dbReference type="PANTHER" id="PTHR32315">
    <property type="entry name" value="ADENINE PHOSPHORIBOSYLTRANSFERASE"/>
    <property type="match status" value="1"/>
</dbReference>
<dbReference type="PANTHER" id="PTHR32315:SF3">
    <property type="entry name" value="ADENINE PHOSPHORIBOSYLTRANSFERASE"/>
    <property type="match status" value="1"/>
</dbReference>
<dbReference type="Pfam" id="PF00156">
    <property type="entry name" value="Pribosyltran"/>
    <property type="match status" value="1"/>
</dbReference>
<dbReference type="SUPFAM" id="SSF53271">
    <property type="entry name" value="PRTase-like"/>
    <property type="match status" value="1"/>
</dbReference>